<organism evidence="9">
    <name type="scientific">Geobacillus stearothermophilus</name>
    <name type="common">Bacillus stearothermophilus</name>
    <dbReference type="NCBI Taxonomy" id="1422"/>
    <lineage>
        <taxon>Bacteria</taxon>
        <taxon>Bacillati</taxon>
        <taxon>Bacillota</taxon>
        <taxon>Bacilli</taxon>
        <taxon>Bacillales</taxon>
        <taxon>Anoxybacillaceae</taxon>
        <taxon>Geobacillus</taxon>
    </lineage>
</organism>
<keyword id="KW-0002">3D-structure</keyword>
<keyword id="KW-0119">Carbohydrate metabolism</keyword>
<keyword id="KW-0963">Cytoplasm</keyword>
<keyword id="KW-0378">Hydrolase</keyword>
<keyword id="KW-0624">Polysaccharide degradation</keyword>
<keyword id="KW-0719">Serine esterase</keyword>
<proteinExistence type="evidence at protein level"/>
<dbReference type="EC" id="3.1.1.72" evidence="1"/>
<dbReference type="EMBL" id="DQ868502">
    <property type="protein sequence ID" value="ABI49953.1"/>
    <property type="molecule type" value="Genomic_DNA"/>
</dbReference>
<dbReference type="PDB" id="3W7V">
    <property type="method" value="X-ray"/>
    <property type="resolution" value="1.85 A"/>
    <property type="chains" value="A/B=1-219"/>
</dbReference>
<dbReference type="PDB" id="4JHL">
    <property type="method" value="X-ray"/>
    <property type="resolution" value="1.70 A"/>
    <property type="chains" value="A/B=1-219"/>
</dbReference>
<dbReference type="PDB" id="4JJ4">
    <property type="method" value="X-ray"/>
    <property type="resolution" value="2.13 A"/>
    <property type="chains" value="A/B=1-219"/>
</dbReference>
<dbReference type="PDB" id="4JJ6">
    <property type="method" value="X-ray"/>
    <property type="resolution" value="1.80 A"/>
    <property type="chains" value="A/B=1-219"/>
</dbReference>
<dbReference type="PDB" id="4JKO">
    <property type="method" value="X-ray"/>
    <property type="resolution" value="1.90 A"/>
    <property type="chains" value="A/B=1-219"/>
</dbReference>
<dbReference type="PDB" id="4OAO">
    <property type="method" value="X-ray"/>
    <property type="resolution" value="2.05 A"/>
    <property type="chains" value="A/B=1-219"/>
</dbReference>
<dbReference type="PDB" id="4OAP">
    <property type="method" value="X-ray"/>
    <property type="resolution" value="1.93 A"/>
    <property type="chains" value="A/B=1-219"/>
</dbReference>
<dbReference type="PDB" id="5BN1">
    <property type="method" value="X-ray"/>
    <property type="resolution" value="1.60 A"/>
    <property type="chains" value="A/B=1-219"/>
</dbReference>
<dbReference type="PDBsum" id="3W7V"/>
<dbReference type="PDBsum" id="4JHL"/>
<dbReference type="PDBsum" id="4JJ4"/>
<dbReference type="PDBsum" id="4JJ6"/>
<dbReference type="PDBsum" id="4JKO"/>
<dbReference type="PDBsum" id="4OAO"/>
<dbReference type="PDBsum" id="4OAP"/>
<dbReference type="PDBsum" id="5BN1"/>
<dbReference type="SMR" id="Q09LX1"/>
<dbReference type="BRENDA" id="3.1.1.72">
    <property type="organism ID" value="623"/>
</dbReference>
<dbReference type="UniPathway" id="UPA00114"/>
<dbReference type="EvolutionaryTrace" id="Q09LX1"/>
<dbReference type="GO" id="GO:0005737">
    <property type="term" value="C:cytoplasm"/>
    <property type="evidence" value="ECO:0007669"/>
    <property type="project" value="UniProtKB-SubCell"/>
</dbReference>
<dbReference type="GO" id="GO:0046555">
    <property type="term" value="F:acetylxylan esterase activity"/>
    <property type="evidence" value="ECO:0000314"/>
    <property type="project" value="CACAO"/>
</dbReference>
<dbReference type="GO" id="GO:0004622">
    <property type="term" value="F:lysophospholipase activity"/>
    <property type="evidence" value="ECO:0007669"/>
    <property type="project" value="TreeGrafter"/>
</dbReference>
<dbReference type="GO" id="GO:0045493">
    <property type="term" value="P:xylan catabolic process"/>
    <property type="evidence" value="ECO:0007669"/>
    <property type="project" value="UniProtKB-UniPathway"/>
</dbReference>
<dbReference type="CDD" id="cd01834">
    <property type="entry name" value="SGNH_hydrolase_like_2"/>
    <property type="match status" value="1"/>
</dbReference>
<dbReference type="Gene3D" id="3.40.50.1110">
    <property type="entry name" value="SGNH hydrolase"/>
    <property type="match status" value="1"/>
</dbReference>
<dbReference type="InterPro" id="IPR051532">
    <property type="entry name" value="Ester_Hydrolysis_Enzymes"/>
</dbReference>
<dbReference type="InterPro" id="IPR013830">
    <property type="entry name" value="SGNH_hydro"/>
</dbReference>
<dbReference type="InterPro" id="IPR036514">
    <property type="entry name" value="SGNH_hydro_sf"/>
</dbReference>
<dbReference type="PANTHER" id="PTHR30383:SF5">
    <property type="entry name" value="SGNH HYDROLASE-TYPE ESTERASE DOMAIN-CONTAINING PROTEIN"/>
    <property type="match status" value="1"/>
</dbReference>
<dbReference type="PANTHER" id="PTHR30383">
    <property type="entry name" value="THIOESTERASE 1/PROTEASE 1/LYSOPHOSPHOLIPASE L1"/>
    <property type="match status" value="1"/>
</dbReference>
<dbReference type="Pfam" id="PF13472">
    <property type="entry name" value="Lipase_GDSL_2"/>
    <property type="match status" value="1"/>
</dbReference>
<dbReference type="SUPFAM" id="SSF52266">
    <property type="entry name" value="SGNH hydrolase"/>
    <property type="match status" value="1"/>
</dbReference>
<comment type="function">
    <text evidence="1">Acetylxylan esterase involved in the degradation of xylan, a major structural heterogeneous polysaccharide found in plant biomass representing the second most abundant polysaccharide in the biosphere, after cellulose. Cleaves acetyl side groups from the xylose backbone units of the hemicellulolytic polymer xylan and xylo-oligosaccharides. Hydrolyzes about 20%-30% of the available acetyl groups on fully acetylated birch wood xylan. Completely deacetylates xylobiose peracetate (fully acetylated), and is active on both the alpha- and beta-forms of the sugar. Also hydrolyzes fully acetylated methyl-beta-D-xylopyranoside and methyl-beta-D-glucopyranoside, and the synthetic substrates 2-naphthyl acetate, 4-nitrophenyl acetate, 4-methylumbelliferyl acetate, and phenyl acetate.</text>
</comment>
<comment type="catalytic activity">
    <reaction evidence="1">
        <text>Deacetylation of xylans and xylo-oligosaccharides.</text>
        <dbReference type="EC" id="3.1.1.72"/>
    </reaction>
</comment>
<comment type="biophysicochemical properties">
    <kinetics>
        <KM evidence="1">7 mM for phenyl acetate (at pH 6.0 and 30 degrees Celsius)</KM>
        <KM evidence="1">9 mM for 2-naphtyl acetate (at pH 6.0 and 30 degrees Celsius)</KM>
        <KM evidence="1">3 mM for 4-methylumbelliferyl acetate (at pH 6.0 and 30 degrees Celsius)</KM>
        <KM evidence="1">27 mM for 4-nitrophenyl acetate (at pH 6.0 and 30 degrees Celsius)</KM>
        <text evidence="1">kcat is 77 sec(-1) with phenyl acetate as substrate. kcat is 190 sec(-1) with 2-naphtyl acetate as substrate. kcat is 123 sec(-1) with 4-methylumbelliferyl acetate as substrate. kcat is 31 sec(-1) with 4-nitrophenyl acetate as substrate (at pH 6.0 and 30 degrees Celsius).</text>
    </kinetics>
    <phDependence>
        <text evidence="1">Optimum pH is 7.1-9.2.</text>
    </phDependence>
    <temperatureDependence>
        <text evidence="1">Optimum temperature is 50-60 degrees Celsius. Is stable at 60 degrees Celsius and loses most of its activity at 70 degrees Celsius.</text>
    </temperatureDependence>
</comment>
<comment type="pathway">
    <text evidence="1">Glycan degradation; xylan degradation.</text>
</comment>
<comment type="subunit">
    <text evidence="2">Homooctamer, presenting a unique donut-shaped quaternary structure built of two staggered tetrameric rings. The eight active sites are organized in four closely situated pairs, which face the relatively wide internal cavity.</text>
</comment>
<comment type="subcellular location">
    <subcellularLocation>
        <location evidence="7">Cytoplasm</location>
    </subcellularLocation>
</comment>
<comment type="induction">
    <text evidence="1">Up-regulated by xylose.</text>
</comment>
<comment type="similarity">
    <text evidence="6">Belongs to the 'GDSL' lipolytic enzyme family.</text>
</comment>
<gene>
    <name evidence="4" type="primary">axe2</name>
</gene>
<accession>Q09LX1</accession>
<name>AXE2_GEOSE</name>
<protein>
    <recommendedName>
        <fullName evidence="4">Acetylxylan esterase</fullName>
        <ecNumber evidence="1">3.1.1.72</ecNumber>
    </recommendedName>
    <alternativeName>
        <fullName evidence="5">Acetyl-xylooligosaccharide esterase</fullName>
    </alternativeName>
</protein>
<feature type="chain" id="PRO_0000434101" description="Acetylxylan esterase">
    <location>
        <begin position="1"/>
        <end position="219"/>
    </location>
</feature>
<feature type="active site" description="Nucleophile" evidence="7 8">
    <location>
        <position position="15"/>
    </location>
</feature>
<feature type="active site" description="Charge relay system" evidence="7 8">
    <location>
        <position position="191"/>
    </location>
</feature>
<feature type="active site" description="Charge relay system" evidence="7 8">
    <location>
        <position position="194"/>
    </location>
</feature>
<feature type="site" description="Transition state stabilizer" evidence="8">
    <location>
        <position position="63"/>
    </location>
</feature>
<feature type="site" description="Transition state stabilizer" evidence="8">
    <location>
        <position position="92"/>
    </location>
</feature>
<feature type="mutagenesis site" description="Loss of catalytic activity." evidence="1">
    <original>S</original>
    <variation>A</variation>
    <location>
        <position position="15"/>
    </location>
</feature>
<feature type="mutagenesis site" description="Significant reduction in catalytic activity and modification of the quaternary structure as a homodimer; when associated with P-190." evidence="3">
    <original>Y</original>
    <variation>F</variation>
    <location>
        <position position="184"/>
    </location>
</feature>
<feature type="mutagenesis site" description="Significant reduction in catalytic activity and modification of the quaternary structure as a homodimer; when associated with F-184." evidence="3">
    <original>W</original>
    <variation>P</variation>
    <location>
        <position position="190"/>
    </location>
</feature>
<feature type="mutagenesis site" description="Loss of catalytic activity." evidence="1">
    <original>D</original>
    <variation>A</variation>
    <location>
        <position position="191"/>
    </location>
</feature>
<feature type="mutagenesis site" description="Loss of catalytic activity." evidence="1">
    <original>H</original>
    <variation>A</variation>
    <location>
        <position position="194"/>
    </location>
</feature>
<feature type="strand" evidence="11">
    <location>
        <begin position="8"/>
        <end position="14"/>
    </location>
</feature>
<feature type="helix" evidence="11">
    <location>
        <begin position="15"/>
        <end position="18"/>
    </location>
</feature>
<feature type="turn" evidence="11">
    <location>
        <begin position="23"/>
        <end position="25"/>
    </location>
</feature>
<feature type="strand" evidence="11">
    <location>
        <begin position="28"/>
        <end position="30"/>
    </location>
</feature>
<feature type="helix" evidence="11">
    <location>
        <begin position="31"/>
        <end position="33"/>
    </location>
</feature>
<feature type="helix" evidence="11">
    <location>
        <begin position="37"/>
        <end position="48"/>
    </location>
</feature>
<feature type="helix" evidence="10">
    <location>
        <begin position="50"/>
        <end position="52"/>
    </location>
</feature>
<feature type="strand" evidence="11">
    <location>
        <begin position="55"/>
        <end position="58"/>
    </location>
</feature>
<feature type="helix" evidence="11">
    <location>
        <begin position="66"/>
        <end position="76"/>
    </location>
</feature>
<feature type="helix" evidence="11">
    <location>
        <begin position="78"/>
        <end position="80"/>
    </location>
</feature>
<feature type="strand" evidence="11">
    <location>
        <begin position="83"/>
        <end position="88"/>
    </location>
</feature>
<feature type="helix" evidence="11">
    <location>
        <begin position="91"/>
        <end position="99"/>
    </location>
</feature>
<feature type="helix" evidence="11">
    <location>
        <begin position="104"/>
        <end position="106"/>
    </location>
</feature>
<feature type="helix" evidence="11">
    <location>
        <begin position="110"/>
        <end position="124"/>
    </location>
</feature>
<feature type="helix" evidence="11">
    <location>
        <begin position="125"/>
        <end position="127"/>
    </location>
</feature>
<feature type="strand" evidence="11">
    <location>
        <begin position="128"/>
        <end position="134"/>
    </location>
</feature>
<feature type="helix" evidence="11">
    <location>
        <begin position="146"/>
        <end position="165"/>
    </location>
</feature>
<feature type="strand" evidence="11">
    <location>
        <begin position="168"/>
        <end position="170"/>
    </location>
</feature>
<feature type="helix" evidence="11">
    <location>
        <begin position="172"/>
        <end position="180"/>
    </location>
</feature>
<feature type="helix" evidence="11">
    <location>
        <begin position="185"/>
        <end position="187"/>
    </location>
</feature>
<feature type="strand" evidence="11">
    <location>
        <begin position="192"/>
        <end position="194"/>
    </location>
</feature>
<feature type="helix" evidence="11">
    <location>
        <begin position="197"/>
        <end position="211"/>
    </location>
</feature>
<reference key="1">
    <citation type="submission" date="2006-07" db="EMBL/GenBank/DDBJ databases">
        <title>Hemicellulose utilization cluster in Geobacillus stearothermophilus strain T-6.</title>
        <authorList>
            <person name="Shoham Y."/>
            <person name="Gat O."/>
            <person name="Shulami S."/>
            <person name="Zaide G."/>
            <person name="Zolotnitsky G."/>
            <person name="Langut Y."/>
        </authorList>
    </citation>
    <scope>NUCLEOTIDE SEQUENCE [GENOMIC DNA]</scope>
    <source>
        <strain>T-6</strain>
    </source>
</reference>
<reference key="2">
    <citation type="journal article" date="2011" name="J. Biol. Chem.">
        <title>A new family of carbohydrate esterases is represented by a GDSL hydrolase/acetylxylan esterase from Geobacillus stearothermophilus.</title>
        <authorList>
            <person name="Alalouf O."/>
            <person name="Balazs Y."/>
            <person name="Volkinshtein M."/>
            <person name="Grimpel Y."/>
            <person name="Shoham G."/>
            <person name="Shoham Y."/>
        </authorList>
    </citation>
    <scope>FUNCTION</scope>
    <scope>CATALYTIC ACTIVITY</scope>
    <scope>SUBSTRATE SPECIFICITY</scope>
    <scope>BIOPHYSICOCHEMICAL PROPERTIES</scope>
    <scope>INDUCTION</scope>
    <scope>PATHWAY</scope>
    <scope>MUTAGENESIS OF SER-15; ASP-191 AND HIS-194</scope>
    <scope>CATALYTIC MECHANISM</scope>
    <scope>ACTIVE SITE</scope>
    <source>
        <strain>T-6</strain>
    </source>
</reference>
<reference key="3">
    <citation type="journal article" date="2013" name="Acta Crystallogr. F">
        <title>Crystallization and preliminary crystallographic analysis of Axe2, an acetylxylan esterase from Geobacillus stearothermophilus.</title>
        <authorList>
            <person name="Lansky S."/>
            <person name="Alalouf O."/>
            <person name="Solomon V."/>
            <person name="Alhassid A."/>
            <person name="Govada L."/>
            <person name="Chayen N.E."/>
            <person name="Chayan N.E."/>
            <person name="Belrhali H."/>
            <person name="Shoham Y."/>
            <person name="Shoham G."/>
        </authorList>
    </citation>
    <scope>CRYSTALLIZATION</scope>
    <source>
        <strain>T-6</strain>
    </source>
</reference>
<reference key="4">
    <citation type="journal article" date="2014" name="Acta Crystallogr. F">
        <title>Preliminary crystallographic analysis of a double mutant of the acetyl xylo-oligosaccharide esterase Axe2 in its dimeric form.</title>
        <authorList>
            <person name="Lansky S."/>
            <person name="Alalouf O."/>
            <person name="Salama R."/>
            <person name="Dvir H."/>
            <person name="Shoham Y."/>
            <person name="Shoham G."/>
        </authorList>
    </citation>
    <scope>CRYSTALLIZATION</scope>
    <scope>MUTAGENESIS OF TYR-184 AND TRP-190</scope>
    <source>
        <strain>T-6</strain>
    </source>
</reference>
<reference key="5">
    <citation type="submission" date="2013-03" db="PDB data bank">
        <title>To be published.</title>
        <authorList>
            <person name="Lansky S."/>
            <person name="Alalouf O."/>
            <person name="Solomon V."/>
            <person name="Alhassid A."/>
            <person name="Belrahli H."/>
            <person name="Govada L."/>
            <person name="Chayan N.E."/>
            <person name="Shoham Y."/>
            <person name="Shoham G."/>
        </authorList>
    </citation>
    <scope>X-RAY CRYSTALLOGRAPHY (1.80 ANGSTROMS) OF MUTANTS ALA-191 AND ALA-194</scope>
    <source>
        <strain>T-6</strain>
    </source>
</reference>
<reference key="6">
    <citation type="journal article" date="2014" name="Acta Crystallogr. D">
        <title>A unique octameric structure of Axe2, an intracellular acetyl-xylooligosaccharide esterase from Geobacillus stearothermophilus.</title>
        <authorList>
            <person name="Lansky S."/>
            <person name="Alalouf O."/>
            <person name="Solomon H.V."/>
            <person name="Alhassid A."/>
            <person name="Govada L."/>
            <person name="Chayen N.E."/>
            <person name="Belrhali H."/>
            <person name="Shoham Y."/>
            <person name="Shoham G."/>
        </authorList>
    </citation>
    <scope>X-RAY CRYSTALLOGRAPHY (1.70 ANGSTROMS) OF WILD-TYPE AND MUTANT ALA-15</scope>
    <scope>SUBUNIT</scope>
    <scope>ACTIVE SITE</scope>
    <source>
        <strain>T-6</strain>
    </source>
</reference>
<reference key="7">
    <citation type="submission" date="2014-01" db="PDB data bank">
        <authorList>
            <person name="Lansky S."/>
            <person name="Alalouf O."/>
            <person name="Solomon H.V."/>
            <person name="Belrhali H."/>
            <person name="Shoham Y."/>
            <person name="Shoham G."/>
        </authorList>
    </citation>
    <scope>X-RAY CRYSTALLOGRAPHY (1.93 ANGSTROMS) OF MUTANTS ALA-55 AND ILE-190</scope>
    <source>
        <strain>T-6</strain>
    </source>
</reference>
<sequence>MKIGSGEKLLFIGDSITDCGRARPEGEGSFGALGTGYVAYVVGLLQAVYPELGIRVVNKGISGNTVRDLKARWEEDVIAQKPDWVSIMIGINDVWRQYDLPFMKEKHVYLDEYEATLRSLVLETKPLVKGIILMTPFYIEGNEQDPMRRTMDQYGRVVKQIAEETNSLFVDTQAAFNEVLKTLYPAALAWDRVHPSVAGHMILARAFLREIGFEWVRSR</sequence>
<evidence type="ECO:0000269" key="1">
    <source>
    </source>
</evidence>
<evidence type="ECO:0000269" key="2">
    <source>
    </source>
</evidence>
<evidence type="ECO:0000269" key="3">
    <source>
    </source>
</evidence>
<evidence type="ECO:0000303" key="4">
    <source>
    </source>
</evidence>
<evidence type="ECO:0000303" key="5">
    <source>
    </source>
</evidence>
<evidence type="ECO:0000305" key="6"/>
<evidence type="ECO:0000305" key="7">
    <source>
    </source>
</evidence>
<evidence type="ECO:0000305" key="8">
    <source>
    </source>
</evidence>
<evidence type="ECO:0000312" key="9">
    <source>
        <dbReference type="EMBL" id="ABI49953.1"/>
    </source>
</evidence>
<evidence type="ECO:0007829" key="10">
    <source>
        <dbReference type="PDB" id="4JHL"/>
    </source>
</evidence>
<evidence type="ECO:0007829" key="11">
    <source>
        <dbReference type="PDB" id="5BN1"/>
    </source>
</evidence>